<protein>
    <recommendedName>
        <fullName evidence="1">Large ribosomal subunit protein uL23</fullName>
    </recommendedName>
    <alternativeName>
        <fullName evidence="2">50S ribosomal protein L23</fullName>
    </alternativeName>
</protein>
<accession>Q2W2J3</accession>
<evidence type="ECO:0000255" key="1">
    <source>
        <dbReference type="HAMAP-Rule" id="MF_01369"/>
    </source>
</evidence>
<evidence type="ECO:0000305" key="2"/>
<gene>
    <name evidence="1" type="primary">rplW</name>
    <name type="ordered locus">amb3128</name>
</gene>
<feature type="chain" id="PRO_0000272768" description="Large ribosomal subunit protein uL23">
    <location>
        <begin position="1"/>
        <end position="102"/>
    </location>
</feature>
<keyword id="KW-0687">Ribonucleoprotein</keyword>
<keyword id="KW-0689">Ribosomal protein</keyword>
<keyword id="KW-0694">RNA-binding</keyword>
<keyword id="KW-0699">rRNA-binding</keyword>
<name>RL23_PARM1</name>
<dbReference type="EMBL" id="AP007255">
    <property type="protein sequence ID" value="BAE51932.1"/>
    <property type="molecule type" value="Genomic_DNA"/>
</dbReference>
<dbReference type="RefSeq" id="WP_011385497.1">
    <property type="nucleotide sequence ID" value="NC_007626.1"/>
</dbReference>
<dbReference type="SMR" id="Q2W2J3"/>
<dbReference type="STRING" id="342108.amb3128"/>
<dbReference type="KEGG" id="mag:amb3128"/>
<dbReference type="HOGENOM" id="CLU_037562_3_1_5"/>
<dbReference type="OrthoDB" id="9793353at2"/>
<dbReference type="Proteomes" id="UP000007058">
    <property type="component" value="Chromosome"/>
</dbReference>
<dbReference type="GO" id="GO:1990904">
    <property type="term" value="C:ribonucleoprotein complex"/>
    <property type="evidence" value="ECO:0007669"/>
    <property type="project" value="UniProtKB-KW"/>
</dbReference>
<dbReference type="GO" id="GO:0005840">
    <property type="term" value="C:ribosome"/>
    <property type="evidence" value="ECO:0007669"/>
    <property type="project" value="UniProtKB-KW"/>
</dbReference>
<dbReference type="GO" id="GO:0019843">
    <property type="term" value="F:rRNA binding"/>
    <property type="evidence" value="ECO:0007669"/>
    <property type="project" value="UniProtKB-UniRule"/>
</dbReference>
<dbReference type="GO" id="GO:0003735">
    <property type="term" value="F:structural constituent of ribosome"/>
    <property type="evidence" value="ECO:0007669"/>
    <property type="project" value="InterPro"/>
</dbReference>
<dbReference type="GO" id="GO:0006412">
    <property type="term" value="P:translation"/>
    <property type="evidence" value="ECO:0007669"/>
    <property type="project" value="UniProtKB-UniRule"/>
</dbReference>
<dbReference type="FunFam" id="3.30.70.330:FF:000001">
    <property type="entry name" value="50S ribosomal protein L23"/>
    <property type="match status" value="1"/>
</dbReference>
<dbReference type="Gene3D" id="3.30.70.330">
    <property type="match status" value="1"/>
</dbReference>
<dbReference type="HAMAP" id="MF_01369_B">
    <property type="entry name" value="Ribosomal_uL23_B"/>
    <property type="match status" value="1"/>
</dbReference>
<dbReference type="InterPro" id="IPR012677">
    <property type="entry name" value="Nucleotide-bd_a/b_plait_sf"/>
</dbReference>
<dbReference type="InterPro" id="IPR013025">
    <property type="entry name" value="Ribosomal_uL23-like"/>
</dbReference>
<dbReference type="InterPro" id="IPR012678">
    <property type="entry name" value="Ribosomal_uL23/eL15/eS24_sf"/>
</dbReference>
<dbReference type="InterPro" id="IPR001014">
    <property type="entry name" value="Ribosomal_uL23_CS"/>
</dbReference>
<dbReference type="NCBIfam" id="NF004359">
    <property type="entry name" value="PRK05738.1-3"/>
    <property type="match status" value="1"/>
</dbReference>
<dbReference type="NCBIfam" id="NF004360">
    <property type="entry name" value="PRK05738.1-5"/>
    <property type="match status" value="1"/>
</dbReference>
<dbReference type="NCBIfam" id="NF004363">
    <property type="entry name" value="PRK05738.2-4"/>
    <property type="match status" value="1"/>
</dbReference>
<dbReference type="PANTHER" id="PTHR11620">
    <property type="entry name" value="60S RIBOSOMAL PROTEIN L23A"/>
    <property type="match status" value="1"/>
</dbReference>
<dbReference type="Pfam" id="PF00276">
    <property type="entry name" value="Ribosomal_L23"/>
    <property type="match status" value="1"/>
</dbReference>
<dbReference type="SUPFAM" id="SSF54189">
    <property type="entry name" value="Ribosomal proteins S24e, L23 and L15e"/>
    <property type="match status" value="1"/>
</dbReference>
<dbReference type="PROSITE" id="PS00050">
    <property type="entry name" value="RIBOSOMAL_L23"/>
    <property type="match status" value="1"/>
</dbReference>
<proteinExistence type="inferred from homology"/>
<organism>
    <name type="scientific">Paramagnetospirillum magneticum (strain ATCC 700264 / AMB-1)</name>
    <name type="common">Magnetospirillum magneticum</name>
    <dbReference type="NCBI Taxonomy" id="342108"/>
    <lineage>
        <taxon>Bacteria</taxon>
        <taxon>Pseudomonadati</taxon>
        <taxon>Pseudomonadota</taxon>
        <taxon>Alphaproteobacteria</taxon>
        <taxon>Rhodospirillales</taxon>
        <taxon>Magnetospirillaceae</taxon>
        <taxon>Paramagnetospirillum</taxon>
    </lineage>
</organism>
<comment type="function">
    <text evidence="1">One of the early assembly proteins it binds 23S rRNA. One of the proteins that surrounds the polypeptide exit tunnel on the outside of the ribosome. Forms the main docking site for trigger factor binding to the ribosome.</text>
</comment>
<comment type="subunit">
    <text evidence="1">Part of the 50S ribosomal subunit. Contacts protein L29, and trigger factor when it is bound to the ribosome.</text>
</comment>
<comment type="similarity">
    <text evidence="1">Belongs to the universal ribosomal protein uL23 family.</text>
</comment>
<sequence length="102" mass="11046">MSKLVISKERMYDVVRAPVITEKATMGSEFRQVTFKVPLDATKSEIKAAVEGIFGVKVTAVNTLIAKGKVKRFRGRPGVRSDVKKAVVTLAEGHSIDVTTGV</sequence>
<reference key="1">
    <citation type="journal article" date="2005" name="DNA Res.">
        <title>Complete genome sequence of the facultative anaerobic magnetotactic bacterium Magnetospirillum sp. strain AMB-1.</title>
        <authorList>
            <person name="Matsunaga T."/>
            <person name="Okamura Y."/>
            <person name="Fukuda Y."/>
            <person name="Wahyudi A.T."/>
            <person name="Murase Y."/>
            <person name="Takeyama H."/>
        </authorList>
    </citation>
    <scope>NUCLEOTIDE SEQUENCE [LARGE SCALE GENOMIC DNA]</scope>
    <source>
        <strain>ATCC 700264 / AMB-1</strain>
    </source>
</reference>